<dbReference type="EC" id="2.7.7.40" evidence="1"/>
<dbReference type="EMBL" id="CP000410">
    <property type="protein sequence ID" value="ABJ55399.1"/>
    <property type="molecule type" value="Genomic_DNA"/>
</dbReference>
<dbReference type="RefSeq" id="WP_000638508.1">
    <property type="nucleotide sequence ID" value="NZ_JAMLJR010000006.1"/>
</dbReference>
<dbReference type="SMR" id="Q04K52"/>
<dbReference type="PaxDb" id="373153-SPD_1127"/>
<dbReference type="KEGG" id="spd:SPD_1127"/>
<dbReference type="eggNOG" id="COG1211">
    <property type="taxonomic scope" value="Bacteria"/>
</dbReference>
<dbReference type="HOGENOM" id="CLU_061281_2_3_9"/>
<dbReference type="BioCyc" id="SPNE373153:G1G6V-1218-MONOMER"/>
<dbReference type="UniPathway" id="UPA00790"/>
<dbReference type="Proteomes" id="UP000001452">
    <property type="component" value="Chromosome"/>
</dbReference>
<dbReference type="GO" id="GO:0050518">
    <property type="term" value="F:2-C-methyl-D-erythritol 4-phosphate cytidylyltransferase activity"/>
    <property type="evidence" value="ECO:0007669"/>
    <property type="project" value="TreeGrafter"/>
</dbReference>
<dbReference type="GO" id="GO:0047349">
    <property type="term" value="F:D-ribitol-5-phosphate cytidylyltransferase activity"/>
    <property type="evidence" value="ECO:0007669"/>
    <property type="project" value="UniProtKB-UniRule"/>
</dbReference>
<dbReference type="GO" id="GO:0071555">
    <property type="term" value="P:cell wall organization"/>
    <property type="evidence" value="ECO:0007669"/>
    <property type="project" value="UniProtKB-KW"/>
</dbReference>
<dbReference type="GO" id="GO:0008299">
    <property type="term" value="P:isoprenoid biosynthetic process"/>
    <property type="evidence" value="ECO:0007669"/>
    <property type="project" value="InterPro"/>
</dbReference>
<dbReference type="GO" id="GO:1902012">
    <property type="term" value="P:poly(ribitol phosphate) teichoic acid biosynthetic process"/>
    <property type="evidence" value="ECO:0007669"/>
    <property type="project" value="UniProtKB-UniRule"/>
</dbReference>
<dbReference type="CDD" id="cd02516">
    <property type="entry name" value="CDP-ME_synthetase"/>
    <property type="match status" value="1"/>
</dbReference>
<dbReference type="FunFam" id="3.90.550.10:FF:000003">
    <property type="entry name" value="2-C-methyl-D-erythritol 4-phosphate cytidylyltransferase"/>
    <property type="match status" value="1"/>
</dbReference>
<dbReference type="Gene3D" id="3.90.550.10">
    <property type="entry name" value="Spore Coat Polysaccharide Biosynthesis Protein SpsA, Chain A"/>
    <property type="match status" value="1"/>
</dbReference>
<dbReference type="HAMAP" id="MF_02068">
    <property type="entry name" value="TarI"/>
    <property type="match status" value="1"/>
</dbReference>
<dbReference type="InterPro" id="IPR034683">
    <property type="entry name" value="IspD/TarI"/>
</dbReference>
<dbReference type="InterPro" id="IPR050088">
    <property type="entry name" value="IspD/TarI_cytidylyltransf_bact"/>
</dbReference>
<dbReference type="InterPro" id="IPR018294">
    <property type="entry name" value="ISPD_synthase_CS"/>
</dbReference>
<dbReference type="InterPro" id="IPR029044">
    <property type="entry name" value="Nucleotide-diphossugar_trans"/>
</dbReference>
<dbReference type="InterPro" id="IPR034709">
    <property type="entry name" value="TarI"/>
</dbReference>
<dbReference type="NCBIfam" id="NF001183">
    <property type="entry name" value="PRK00155.1-3"/>
    <property type="match status" value="1"/>
</dbReference>
<dbReference type="PANTHER" id="PTHR32125">
    <property type="entry name" value="2-C-METHYL-D-ERYTHRITOL 4-PHOSPHATE CYTIDYLYLTRANSFERASE, CHLOROPLASTIC"/>
    <property type="match status" value="1"/>
</dbReference>
<dbReference type="PANTHER" id="PTHR32125:SF8">
    <property type="entry name" value="RIBITOL-5-PHOSPHATE CYTIDYLYLTRANSFERASE"/>
    <property type="match status" value="1"/>
</dbReference>
<dbReference type="Pfam" id="PF01128">
    <property type="entry name" value="IspD"/>
    <property type="match status" value="1"/>
</dbReference>
<dbReference type="SUPFAM" id="SSF53448">
    <property type="entry name" value="Nucleotide-diphospho-sugar transferases"/>
    <property type="match status" value="1"/>
</dbReference>
<dbReference type="PROSITE" id="PS01295">
    <property type="entry name" value="ISPD"/>
    <property type="match status" value="1"/>
</dbReference>
<feature type="chain" id="PRO_1000022951" description="Ribitol-5-phosphate cytidylyltransferase">
    <location>
        <begin position="1"/>
        <end position="235"/>
    </location>
</feature>
<feature type="binding site" evidence="1">
    <location>
        <begin position="7"/>
        <end position="10"/>
    </location>
    <ligand>
        <name>CTP</name>
        <dbReference type="ChEBI" id="CHEBI:37563"/>
    </ligand>
</feature>
<feature type="binding site" evidence="1">
    <location>
        <begin position="82"/>
        <end position="88"/>
    </location>
    <ligand>
        <name>CTP</name>
        <dbReference type="ChEBI" id="CHEBI:37563"/>
    </ligand>
</feature>
<feature type="binding site" evidence="1">
    <location>
        <position position="113"/>
    </location>
    <ligand>
        <name>CTP</name>
        <dbReference type="ChEBI" id="CHEBI:37563"/>
    </ligand>
</feature>
<feature type="site" description="Transition state stabilizer" evidence="1">
    <location>
        <position position="14"/>
    </location>
</feature>
<feature type="site" description="Transition state stabilizer" evidence="1">
    <location>
        <position position="22"/>
    </location>
</feature>
<feature type="site" description="Positions ribitol 5-phosphate for the nucleophilic attack" evidence="1">
    <location>
        <position position="161"/>
    </location>
</feature>
<feature type="site" description="Positions ribitol 5-phosphate for the nucleophilic attack" evidence="1">
    <location>
        <position position="218"/>
    </location>
</feature>
<organism>
    <name type="scientific">Streptococcus pneumoniae serotype 2 (strain D39 / NCTC 7466)</name>
    <dbReference type="NCBI Taxonomy" id="373153"/>
    <lineage>
        <taxon>Bacteria</taxon>
        <taxon>Bacillati</taxon>
        <taxon>Bacillota</taxon>
        <taxon>Bacilli</taxon>
        <taxon>Lactobacillales</taxon>
        <taxon>Streptococcaceae</taxon>
        <taxon>Streptococcus</taxon>
    </lineage>
</organism>
<reference key="1">
    <citation type="journal article" date="2007" name="J. Bacteriol.">
        <title>Genome sequence of Avery's virulent serotype 2 strain D39 of Streptococcus pneumoniae and comparison with that of unencapsulated laboratory strain R6.</title>
        <authorList>
            <person name="Lanie J.A."/>
            <person name="Ng W.-L."/>
            <person name="Kazmierczak K.M."/>
            <person name="Andrzejewski T.M."/>
            <person name="Davidsen T.M."/>
            <person name="Wayne K.J."/>
            <person name="Tettelin H."/>
            <person name="Glass J.I."/>
            <person name="Winkler M.E."/>
        </authorList>
    </citation>
    <scope>NUCLEOTIDE SEQUENCE [LARGE SCALE GENOMIC DNA]</scope>
    <source>
        <strain>D39 / NCTC 7466</strain>
    </source>
</reference>
<keyword id="KW-0961">Cell wall biogenesis/degradation</keyword>
<keyword id="KW-0548">Nucleotidyltransferase</keyword>
<keyword id="KW-1185">Reference proteome</keyword>
<keyword id="KW-0777">Teichoic acid biosynthesis</keyword>
<keyword id="KW-0808">Transferase</keyword>
<name>TARI_STRP2</name>
<comment type="function">
    <text evidence="1">Catalyzes the transfer of the cytidylyl group of CTP to D-ribitol 5-phosphate.</text>
</comment>
<comment type="catalytic activity">
    <reaction evidence="1">
        <text>D-ribitol 5-phosphate + CTP + H(+) = CDP-L-ribitol + diphosphate</text>
        <dbReference type="Rhea" id="RHEA:12456"/>
        <dbReference type="ChEBI" id="CHEBI:15378"/>
        <dbReference type="ChEBI" id="CHEBI:33019"/>
        <dbReference type="ChEBI" id="CHEBI:37563"/>
        <dbReference type="ChEBI" id="CHEBI:57608"/>
        <dbReference type="ChEBI" id="CHEBI:57695"/>
        <dbReference type="EC" id="2.7.7.40"/>
    </reaction>
</comment>
<comment type="pathway">
    <text evidence="1">Cell wall biogenesis; poly(ribitol phosphate) teichoic acid biosynthesis.</text>
</comment>
<comment type="similarity">
    <text evidence="1">Belongs to the IspD/TarI cytidylyltransferase family. TarI subfamily.</text>
</comment>
<accession>Q04K52</accession>
<sequence length="235" mass="26242">MIYAGILAGGTGTRMGISNLPKQFLELGDRPILIHTIEKFVLEPSIEKIVVGVHGDWVSHAEDLVDKYLPLYKERIIITKGGADRNTSIKNIIEAIDAYRPLTPEDIVVTHDSVRPFITLRMIQDNIQLAQNHDAVDTVVEAVDTIVESTNGQFITDIPNRAHLYQGQTPQTFRCKDFMDLYGSLSDEEKEILTDACKIFVIKGKDVALAKGEYSNLKITTVTDLKIAKSMIEKD</sequence>
<evidence type="ECO:0000255" key="1">
    <source>
        <dbReference type="HAMAP-Rule" id="MF_02068"/>
    </source>
</evidence>
<proteinExistence type="inferred from homology"/>
<gene>
    <name evidence="1" type="primary">tarI</name>
    <name type="ordered locus">SPD_1127</name>
</gene>
<protein>
    <recommendedName>
        <fullName evidence="1">Ribitol-5-phosphate cytidylyltransferase</fullName>
        <ecNumber evidence="1">2.7.7.40</ecNumber>
    </recommendedName>
</protein>